<evidence type="ECO:0000250" key="1">
    <source>
        <dbReference type="UniProtKB" id="Q4GWV4"/>
    </source>
</evidence>
<evidence type="ECO:0000250" key="2">
    <source>
        <dbReference type="UniProtKB" id="Q53I06"/>
    </source>
</evidence>
<evidence type="ECO:0000255" key="3"/>
<evidence type="ECO:0000269" key="4">
    <source>
    </source>
</evidence>
<evidence type="ECO:0000269" key="5">
    <source>
    </source>
</evidence>
<evidence type="ECO:0000303" key="6">
    <source>
    </source>
</evidence>
<evidence type="ECO:0000305" key="7"/>
<evidence type="ECO:0000305" key="8">
    <source>
    </source>
</evidence>
<evidence type="ECO:0000312" key="9">
    <source>
        <dbReference type="EMBL" id="ABD66301.1"/>
    </source>
</evidence>
<feature type="signal peptide" evidence="3">
    <location>
        <begin position="1" status="less than"/>
        <end position="17"/>
    </location>
</feature>
<feature type="chain" id="PRO_5004199054" description="Hemocyte defensin Cg-Defh1">
    <location>
        <begin position="18"/>
        <end position="60"/>
    </location>
</feature>
<feature type="region of interest" description="Binds to membrane interface" evidence="2">
    <location>
        <begin position="22"/>
        <end position="25"/>
    </location>
</feature>
<feature type="region of interest" description="Binds to membrane interface" evidence="2">
    <location>
        <begin position="43"/>
        <end position="49"/>
    </location>
</feature>
<feature type="binding site" evidence="2">
    <location>
        <position position="19"/>
    </location>
    <ligand>
        <name>beta-D-GlcNAc-(1-&gt;4)-Mur2Ac(oyl-L-Ala-gamma-D-Glu-L-Lys-D-Ala-D-Ala)-di-trans,octa-cis-undecaprenyl diphosphate</name>
        <dbReference type="ChEBI" id="CHEBI:60033"/>
    </ligand>
</feature>
<feature type="binding site" evidence="2">
    <location>
        <position position="20"/>
    </location>
    <ligand>
        <name>beta-D-GlcNAc-(1-&gt;4)-Mur2Ac(oyl-L-Ala-gamma-D-Glu-L-Lys-D-Ala-D-Ala)-di-trans,octa-cis-undecaprenyl diphosphate</name>
        <dbReference type="ChEBI" id="CHEBI:60033"/>
    </ligand>
</feature>
<feature type="binding site" evidence="2">
    <location>
        <position position="21"/>
    </location>
    <ligand>
        <name>beta-D-GlcNAc-(1-&gt;4)-Mur2Ac(oyl-L-Ala-gamma-D-Glu-L-Lys-D-Ala-D-Ala)-di-trans,octa-cis-undecaprenyl diphosphate</name>
        <dbReference type="ChEBI" id="CHEBI:60033"/>
    </ligand>
</feature>
<feature type="binding site" evidence="2">
    <location>
        <position position="31"/>
    </location>
    <ligand>
        <name>beta-D-GlcNAc-(1-&gt;4)-Mur2Ac(oyl-L-Ala-gamma-D-Glu-L-Lys-D-Ala-D-Ala)-di-trans,octa-cis-undecaprenyl diphosphate</name>
        <dbReference type="ChEBI" id="CHEBI:60033"/>
    </ligand>
</feature>
<feature type="binding site" evidence="2">
    <location>
        <position position="51"/>
    </location>
    <ligand>
        <name>beta-D-GlcNAc-(1-&gt;4)-Mur2Ac(oyl-L-Ala-gamma-D-Glu-L-Lys-D-Ala-D-Ala)-di-trans,octa-cis-undecaprenyl diphosphate</name>
        <dbReference type="ChEBI" id="CHEBI:60033"/>
    </ligand>
</feature>
<feature type="disulfide bond" evidence="1">
    <location>
        <begin position="21"/>
        <end position="42"/>
    </location>
</feature>
<feature type="disulfide bond" evidence="1">
    <location>
        <begin position="28"/>
        <end position="51"/>
    </location>
</feature>
<feature type="disulfide bond" evidence="1">
    <location>
        <begin position="32"/>
        <end position="53"/>
    </location>
</feature>
<feature type="disulfide bond" evidence="1">
    <location>
        <begin position="37"/>
        <end position="56"/>
    </location>
</feature>
<feature type="non-terminal residue" evidence="8">
    <location>
        <position position="1"/>
    </location>
</feature>
<keyword id="KW-0044">Antibiotic</keyword>
<keyword id="KW-0929">Antimicrobial</keyword>
<keyword id="KW-0211">Defensin</keyword>
<keyword id="KW-1015">Disulfide bond</keyword>
<keyword id="KW-0391">Immunity</keyword>
<keyword id="KW-0399">Innate immunity</keyword>
<keyword id="KW-0446">Lipid-binding</keyword>
<keyword id="KW-0472">Membrane</keyword>
<keyword id="KW-1185">Reference proteome</keyword>
<keyword id="KW-0964">Secreted</keyword>
<keyword id="KW-0732">Signal</keyword>
<keyword id="KW-1052">Target cell membrane</keyword>
<keyword id="KW-1053">Target membrane</keyword>
<reference key="1">
    <citation type="journal article" date="2007" name="Dev. Comp. Immunol.">
        <title>Molecular characterization of two isoforms of defensin from hemocytes of the oyster Crassostrea gigas.</title>
        <authorList>
            <person name="Gonzalez M."/>
            <person name="Gueguen Y."/>
            <person name="Desserre G."/>
            <person name="de Lorgeril J."/>
            <person name="Romestand B."/>
            <person name="Bachere E."/>
        </authorList>
    </citation>
    <scope>NUCLEOTIDE SEQUENCE [MRNA]</scope>
    <scope>TISSUE SPECIFICITY</scope>
    <source>
        <strain>280406</strain>
        <tissue>Hemocyte</tissue>
    </source>
</reference>
<reference key="2">
    <citation type="journal article" date="2010" name="J. Biol. Chem.">
        <title>Insight into invertebrate defensin mechanism of action: oyster defensins inhibit peptidoglycan biosynthesis by binding to lipid II.</title>
        <authorList>
            <person name="Schmitt P."/>
            <person name="Wilmes M."/>
            <person name="Pugniere M."/>
            <person name="Aumelas A."/>
            <person name="Bachere E."/>
            <person name="Sahl H.G."/>
            <person name="Schneider T."/>
            <person name="Destoumieux-Garzon D."/>
        </authorList>
    </citation>
    <scope>FUNCTION</scope>
    <scope>3D-STRUCTURE MODELING</scope>
</reference>
<organism evidence="9">
    <name type="scientific">Magallana gigas</name>
    <name type="common">Pacific oyster</name>
    <name type="synonym">Crassostrea gigas</name>
    <dbReference type="NCBI Taxonomy" id="29159"/>
    <lineage>
        <taxon>Eukaryota</taxon>
        <taxon>Metazoa</taxon>
        <taxon>Spiralia</taxon>
        <taxon>Lophotrochozoa</taxon>
        <taxon>Mollusca</taxon>
        <taxon>Bivalvia</taxon>
        <taxon>Autobranchia</taxon>
        <taxon>Pteriomorphia</taxon>
        <taxon>Ostreida</taxon>
        <taxon>Ostreoidea</taxon>
        <taxon>Ostreidae</taxon>
        <taxon>Magallana</taxon>
    </lineage>
</organism>
<name>DEFH1_MAGGI</name>
<comment type="function">
    <text evidence="5">Antibacterial peptide mostly active against Gram-positive bacteria (PubMed:20605792). It acts by selectively inhibiting peptidoglycan biosynthesis through complex formation with the cell wall precursor lipid II (1:1 molar ratio) thus inhibiting cell wall synthesis (PubMed:20605792). It does not disrupt cell membranes (PubMed:20605792). Is noticeably less potent than Cg-Defh2 and Cg-Defm (PubMed:20605792). Shows no or limited activities against Gram-negative bacteria (PubMed:20605792).</text>
</comment>
<comment type="subcellular location">
    <subcellularLocation>
        <location evidence="7">Secreted</location>
    </subcellularLocation>
    <subcellularLocation>
        <location evidence="2">Target cell membrane</location>
    </subcellularLocation>
</comment>
<comment type="tissue specificity">
    <text evidence="4">Expressed in hemocytes.</text>
</comment>
<comment type="domain">
    <text evidence="1">Has the structural arrangement of an alpha-helix connected to a beta-sheet by disulfide bonds (CSalpha/beta).</text>
</comment>
<comment type="similarity">
    <text evidence="7">Belongs to the invertebrate defensin family.</text>
</comment>
<comment type="online information" name="The antimicrobial peptide database">
    <link uri="https://wangapd3.com/database/query_output.php?ID=02619"/>
</comment>
<accession>Q20A06</accession>
<sequence length="60" mass="6587">LFTLVVLLMVSADMAFAGFGCPRDQYKCNSHCQSIGCRAGYCDAVTLWLRCTCTDCNGKK</sequence>
<proteinExistence type="evidence at transcript level"/>
<dbReference type="EMBL" id="DQ400101">
    <property type="protein sequence ID" value="ABD66301.1"/>
    <property type="molecule type" value="mRNA"/>
</dbReference>
<dbReference type="SMR" id="Q20A06"/>
<dbReference type="InParanoid" id="Q20A06"/>
<dbReference type="Proteomes" id="UP000005408">
    <property type="component" value="Unplaced"/>
</dbReference>
<dbReference type="GO" id="GO:0005576">
    <property type="term" value="C:extracellular region"/>
    <property type="evidence" value="ECO:0007669"/>
    <property type="project" value="UniProtKB-SubCell"/>
</dbReference>
<dbReference type="GO" id="GO:0016020">
    <property type="term" value="C:membrane"/>
    <property type="evidence" value="ECO:0007669"/>
    <property type="project" value="UniProtKB-KW"/>
</dbReference>
<dbReference type="GO" id="GO:0044218">
    <property type="term" value="C:other organism cell membrane"/>
    <property type="evidence" value="ECO:0007669"/>
    <property type="project" value="UniProtKB-KW"/>
</dbReference>
<dbReference type="GO" id="GO:0008289">
    <property type="term" value="F:lipid binding"/>
    <property type="evidence" value="ECO:0007669"/>
    <property type="project" value="UniProtKB-KW"/>
</dbReference>
<dbReference type="GO" id="GO:0042742">
    <property type="term" value="P:defense response to bacterium"/>
    <property type="evidence" value="ECO:0007669"/>
    <property type="project" value="UniProtKB-KW"/>
</dbReference>
<dbReference type="GO" id="GO:0045087">
    <property type="term" value="P:innate immune response"/>
    <property type="evidence" value="ECO:0007669"/>
    <property type="project" value="UniProtKB-KW"/>
</dbReference>
<dbReference type="Gene3D" id="3.30.30.10">
    <property type="entry name" value="Knottin, scorpion toxin-like"/>
    <property type="match status" value="1"/>
</dbReference>
<dbReference type="InterPro" id="IPR001542">
    <property type="entry name" value="Defensin_invertebrate/fungal"/>
</dbReference>
<dbReference type="InterPro" id="IPR036574">
    <property type="entry name" value="Scorpion_toxin-like_sf"/>
</dbReference>
<dbReference type="Pfam" id="PF01097">
    <property type="entry name" value="Defensin_2"/>
    <property type="match status" value="1"/>
</dbReference>
<dbReference type="SUPFAM" id="SSF57095">
    <property type="entry name" value="Scorpion toxin-like"/>
    <property type="match status" value="1"/>
</dbReference>
<dbReference type="PROSITE" id="PS51378">
    <property type="entry name" value="INVERT_DEFENSINS"/>
    <property type="match status" value="1"/>
</dbReference>
<protein>
    <recommendedName>
        <fullName evidence="6">Hemocyte defensin Cg-Defh1</fullName>
    </recommendedName>
</protein>